<protein>
    <recommendedName>
        <fullName evidence="1">DNA gyrase subunit B</fullName>
        <ecNumber evidence="1">5.6.2.2</ecNumber>
    </recommendedName>
</protein>
<comment type="function">
    <text evidence="1">A type II topoisomerase that negatively supercoils closed circular double-stranded (ds) DNA in an ATP-dependent manner to modulate DNA topology and maintain chromosomes in an underwound state. Negative supercoiling favors strand separation, and DNA replication, transcription, recombination and repair, all of which involve strand separation. Also able to catalyze the interconversion of other topological isomers of dsDNA rings, including catenanes and knotted rings. Type II topoisomerases break and join 2 DNA strands simultaneously in an ATP-dependent manner.</text>
</comment>
<comment type="catalytic activity">
    <reaction evidence="1">
        <text>ATP-dependent breakage, passage and rejoining of double-stranded DNA.</text>
        <dbReference type="EC" id="5.6.2.2"/>
    </reaction>
</comment>
<comment type="cofactor">
    <cofactor evidence="1">
        <name>Mg(2+)</name>
        <dbReference type="ChEBI" id="CHEBI:18420"/>
    </cofactor>
    <cofactor evidence="1">
        <name>Mn(2+)</name>
        <dbReference type="ChEBI" id="CHEBI:29035"/>
    </cofactor>
    <cofactor evidence="1">
        <name>Ca(2+)</name>
        <dbReference type="ChEBI" id="CHEBI:29108"/>
    </cofactor>
    <text evidence="1">Binds two Mg(2+) per subunit. The magnesium ions form salt bridges with both the protein and the DNA. Can also accept other divalent metal cations, such as Mn(2+) or Ca(2+).</text>
</comment>
<comment type="subunit">
    <text evidence="1">Heterotetramer, composed of two GyrA and two GyrB chains. In the heterotetramer, GyrA contains the active site tyrosine that forms a transient covalent intermediate with DNA, while GyrB binds cofactors and catalyzes ATP hydrolysis.</text>
</comment>
<comment type="subcellular location">
    <subcellularLocation>
        <location evidence="1">Cytoplasm</location>
    </subcellularLocation>
</comment>
<comment type="miscellaneous">
    <text evidence="1">Few gyrases are as efficient as E.coli at forming negative supercoils. Not all organisms have 2 type II topoisomerases; in organisms with a single type II topoisomerase this enzyme also has to decatenate newly replicated chromosomes.</text>
</comment>
<comment type="similarity">
    <text evidence="1">Belongs to the type II topoisomerase GyrB family.</text>
</comment>
<organism>
    <name type="scientific">Streptomyces coelicolor (strain ATCC BAA-471 / A3(2) / M145)</name>
    <dbReference type="NCBI Taxonomy" id="100226"/>
    <lineage>
        <taxon>Bacteria</taxon>
        <taxon>Bacillati</taxon>
        <taxon>Actinomycetota</taxon>
        <taxon>Actinomycetes</taxon>
        <taxon>Kitasatosporales</taxon>
        <taxon>Streptomycetaceae</taxon>
        <taxon>Streptomyces</taxon>
        <taxon>Streptomyces albidoflavus group</taxon>
    </lineage>
</organism>
<name>GYRB_STRCO</name>
<dbReference type="EC" id="5.6.2.2" evidence="1"/>
<dbReference type="EMBL" id="L27063">
    <property type="protein sequence ID" value="AAA65215.1"/>
    <property type="molecule type" value="Genomic_DNA"/>
</dbReference>
<dbReference type="EMBL" id="AL939118">
    <property type="protein sequence ID" value="CAB92994.1"/>
    <property type="molecule type" value="Genomic_DNA"/>
</dbReference>
<dbReference type="RefSeq" id="NP_628061.1">
    <property type="nucleotide sequence ID" value="NC_003888.3"/>
</dbReference>
<dbReference type="RefSeq" id="WP_011029285.1">
    <property type="nucleotide sequence ID" value="NZ_VNID01000003.1"/>
</dbReference>
<dbReference type="SMR" id="P35886"/>
<dbReference type="FunCoup" id="P35886">
    <property type="interactions" value="173"/>
</dbReference>
<dbReference type="STRING" id="100226.gene:17761501"/>
<dbReference type="PaxDb" id="100226-SCO3874"/>
<dbReference type="GeneID" id="91385168"/>
<dbReference type="KEGG" id="sco:SCO3874"/>
<dbReference type="PATRIC" id="fig|100226.15.peg.3947"/>
<dbReference type="eggNOG" id="COG0187">
    <property type="taxonomic scope" value="Bacteria"/>
</dbReference>
<dbReference type="HOGENOM" id="CLU_006146_4_1_11"/>
<dbReference type="InParanoid" id="P35886"/>
<dbReference type="OrthoDB" id="9802808at2"/>
<dbReference type="PhylomeDB" id="P35886"/>
<dbReference type="Proteomes" id="UP000001973">
    <property type="component" value="Chromosome"/>
</dbReference>
<dbReference type="GO" id="GO:0005694">
    <property type="term" value="C:chromosome"/>
    <property type="evidence" value="ECO:0007669"/>
    <property type="project" value="InterPro"/>
</dbReference>
<dbReference type="GO" id="GO:0005737">
    <property type="term" value="C:cytoplasm"/>
    <property type="evidence" value="ECO:0007669"/>
    <property type="project" value="UniProtKB-SubCell"/>
</dbReference>
<dbReference type="GO" id="GO:0005524">
    <property type="term" value="F:ATP binding"/>
    <property type="evidence" value="ECO:0007669"/>
    <property type="project" value="UniProtKB-UniRule"/>
</dbReference>
<dbReference type="GO" id="GO:0003677">
    <property type="term" value="F:DNA binding"/>
    <property type="evidence" value="ECO:0007669"/>
    <property type="project" value="UniProtKB-KW"/>
</dbReference>
<dbReference type="GO" id="GO:0034335">
    <property type="term" value="F:DNA negative supercoiling activity"/>
    <property type="evidence" value="ECO:0007669"/>
    <property type="project" value="UniProtKB-ARBA"/>
</dbReference>
<dbReference type="GO" id="GO:0046872">
    <property type="term" value="F:metal ion binding"/>
    <property type="evidence" value="ECO:0007669"/>
    <property type="project" value="UniProtKB-KW"/>
</dbReference>
<dbReference type="GO" id="GO:0006265">
    <property type="term" value="P:DNA topological change"/>
    <property type="evidence" value="ECO:0007669"/>
    <property type="project" value="UniProtKB-UniRule"/>
</dbReference>
<dbReference type="GO" id="GO:0006261">
    <property type="term" value="P:DNA-templated DNA replication"/>
    <property type="evidence" value="ECO:0007669"/>
    <property type="project" value="UniProtKB-UniRule"/>
</dbReference>
<dbReference type="CDD" id="cd16928">
    <property type="entry name" value="HATPase_GyrB-like"/>
    <property type="match status" value="1"/>
</dbReference>
<dbReference type="CDD" id="cd00822">
    <property type="entry name" value="TopoII_Trans_DNA_gyrase"/>
    <property type="match status" value="1"/>
</dbReference>
<dbReference type="CDD" id="cd03366">
    <property type="entry name" value="TOPRIM_TopoIIA_GyrB"/>
    <property type="match status" value="1"/>
</dbReference>
<dbReference type="FunFam" id="3.30.230.10:FF:000005">
    <property type="entry name" value="DNA gyrase subunit B"/>
    <property type="match status" value="1"/>
</dbReference>
<dbReference type="FunFam" id="3.30.565.10:FF:000002">
    <property type="entry name" value="DNA gyrase subunit B"/>
    <property type="match status" value="1"/>
</dbReference>
<dbReference type="FunFam" id="3.40.50.670:FF:000002">
    <property type="entry name" value="DNA gyrase subunit B"/>
    <property type="match status" value="1"/>
</dbReference>
<dbReference type="Gene3D" id="3.30.230.10">
    <property type="match status" value="1"/>
</dbReference>
<dbReference type="Gene3D" id="3.40.50.670">
    <property type="match status" value="1"/>
</dbReference>
<dbReference type="Gene3D" id="3.30.565.10">
    <property type="entry name" value="Histidine kinase-like ATPase, C-terminal domain"/>
    <property type="match status" value="1"/>
</dbReference>
<dbReference type="HAMAP" id="MF_01898">
    <property type="entry name" value="GyrB"/>
    <property type="match status" value="1"/>
</dbReference>
<dbReference type="InterPro" id="IPR002288">
    <property type="entry name" value="DNA_gyrase_B_C"/>
</dbReference>
<dbReference type="InterPro" id="IPR011557">
    <property type="entry name" value="GyrB"/>
</dbReference>
<dbReference type="InterPro" id="IPR036890">
    <property type="entry name" value="HATPase_C_sf"/>
</dbReference>
<dbReference type="InterPro" id="IPR020568">
    <property type="entry name" value="Ribosomal_Su5_D2-typ_SF"/>
</dbReference>
<dbReference type="InterPro" id="IPR014721">
    <property type="entry name" value="Ribsml_uS5_D2-typ_fold_subgr"/>
</dbReference>
<dbReference type="InterPro" id="IPR001241">
    <property type="entry name" value="Topo_IIA"/>
</dbReference>
<dbReference type="InterPro" id="IPR013760">
    <property type="entry name" value="Topo_IIA-like_dom_sf"/>
</dbReference>
<dbReference type="InterPro" id="IPR000565">
    <property type="entry name" value="Topo_IIA_B"/>
</dbReference>
<dbReference type="InterPro" id="IPR013759">
    <property type="entry name" value="Topo_IIA_B_C"/>
</dbReference>
<dbReference type="InterPro" id="IPR013506">
    <property type="entry name" value="Topo_IIA_bsu_dom2"/>
</dbReference>
<dbReference type="InterPro" id="IPR018522">
    <property type="entry name" value="TopoIIA_CS"/>
</dbReference>
<dbReference type="InterPro" id="IPR006171">
    <property type="entry name" value="TOPRIM_dom"/>
</dbReference>
<dbReference type="InterPro" id="IPR034160">
    <property type="entry name" value="TOPRIM_GyrB"/>
</dbReference>
<dbReference type="NCBIfam" id="TIGR01059">
    <property type="entry name" value="gyrB"/>
    <property type="match status" value="1"/>
</dbReference>
<dbReference type="NCBIfam" id="NF004189">
    <property type="entry name" value="PRK05644.1"/>
    <property type="match status" value="1"/>
</dbReference>
<dbReference type="NCBIfam" id="NF011501">
    <property type="entry name" value="PRK14939.1"/>
    <property type="match status" value="1"/>
</dbReference>
<dbReference type="PANTHER" id="PTHR45866:SF1">
    <property type="entry name" value="DNA GYRASE SUBUNIT B, MITOCHONDRIAL"/>
    <property type="match status" value="1"/>
</dbReference>
<dbReference type="PANTHER" id="PTHR45866">
    <property type="entry name" value="DNA GYRASE/TOPOISOMERASE SUBUNIT B"/>
    <property type="match status" value="1"/>
</dbReference>
<dbReference type="Pfam" id="PF00204">
    <property type="entry name" value="DNA_gyraseB"/>
    <property type="match status" value="1"/>
</dbReference>
<dbReference type="Pfam" id="PF00986">
    <property type="entry name" value="DNA_gyraseB_C"/>
    <property type="match status" value="1"/>
</dbReference>
<dbReference type="Pfam" id="PF02518">
    <property type="entry name" value="HATPase_c"/>
    <property type="match status" value="1"/>
</dbReference>
<dbReference type="Pfam" id="PF01751">
    <property type="entry name" value="Toprim"/>
    <property type="match status" value="1"/>
</dbReference>
<dbReference type="PRINTS" id="PR01159">
    <property type="entry name" value="DNAGYRASEB"/>
</dbReference>
<dbReference type="PRINTS" id="PR00418">
    <property type="entry name" value="TPI2FAMILY"/>
</dbReference>
<dbReference type="SMART" id="SM00387">
    <property type="entry name" value="HATPase_c"/>
    <property type="match status" value="1"/>
</dbReference>
<dbReference type="SMART" id="SM00433">
    <property type="entry name" value="TOP2c"/>
    <property type="match status" value="1"/>
</dbReference>
<dbReference type="SUPFAM" id="SSF55874">
    <property type="entry name" value="ATPase domain of HSP90 chaperone/DNA topoisomerase II/histidine kinase"/>
    <property type="match status" value="1"/>
</dbReference>
<dbReference type="SUPFAM" id="SSF54211">
    <property type="entry name" value="Ribosomal protein S5 domain 2-like"/>
    <property type="match status" value="1"/>
</dbReference>
<dbReference type="SUPFAM" id="SSF56719">
    <property type="entry name" value="Type II DNA topoisomerase"/>
    <property type="match status" value="1"/>
</dbReference>
<dbReference type="PROSITE" id="PS00177">
    <property type="entry name" value="TOPOISOMERASE_II"/>
    <property type="match status" value="1"/>
</dbReference>
<dbReference type="PROSITE" id="PS50880">
    <property type="entry name" value="TOPRIM"/>
    <property type="match status" value="1"/>
</dbReference>
<sequence>MADSGNPNENNPSTDTGVNDAVSTSHGDASASYDASAITVLEGLDAVRKRPGMYIGSTGERGLHHLVQEVVDNSVDEALAGHADTIDVTILPDGGVRVVDNGRGIPVGIVPSEGKPAVEVVLTVLHAGGKFGGGGYAVSGGLHGVGVSVVNALSTRVAVEVKTDGYRWTQEYKLGVPTASLARHEATEETGTTVTFWADGDIFETTDYSFETLSRRFQEMAFLNKGLKINLTDERESAKATAGADEAGEDEKHEVKSVSYHYEGGIVDFVTYLNSRKGELVHPTVIDLEAEDKDKSLSLEVAMQWNGGYTEGVYSFANIIHTHEGGTHEEGFRAALTSLINKYARDKKLLREKDDNLTGDDIREGLTAIISVKLAEPQFEGQTKTKLGNTEVKTFVQKVVYEHLTDWLDRNPNEAADIIRKGIQAAHARVAARKARDLTRRKGLLESASLPGKLSDCQSNDPTKCEIFIVEGDSAGGSAKSGRNPQYQAILPIRGKILNVEKARIDRILQNQEIQAMISAFGTGVHEDFDIEKLRYHKIILMADADVDGQHINTLLLTFLFRFMRPLVESGHVYLSRPPLYKIKWGRDDFEYAYSDRERDALIEMGRQAGKRIREDSVQRFKGLGEMNAEELRITTMDQEHRVLGQVTLDDAAQADDLFSVLMGEDVEARRAFIQRNAKDVRFLDI</sequence>
<gene>
    <name evidence="1" type="primary">gyrB</name>
    <name type="ordered locus">SCO3874</name>
    <name type="ORF">SCH18.11c</name>
</gene>
<evidence type="ECO:0000255" key="1">
    <source>
        <dbReference type="HAMAP-Rule" id="MF_01898"/>
    </source>
</evidence>
<evidence type="ECO:0000256" key="2">
    <source>
        <dbReference type="SAM" id="MobiDB-lite"/>
    </source>
</evidence>
<keyword id="KW-0067">ATP-binding</keyword>
<keyword id="KW-0963">Cytoplasm</keyword>
<keyword id="KW-0238">DNA-binding</keyword>
<keyword id="KW-0413">Isomerase</keyword>
<keyword id="KW-0460">Magnesium</keyword>
<keyword id="KW-0479">Metal-binding</keyword>
<keyword id="KW-0547">Nucleotide-binding</keyword>
<keyword id="KW-1185">Reference proteome</keyword>
<keyword id="KW-0799">Topoisomerase</keyword>
<accession>P35886</accession>
<reference key="1">
    <citation type="journal article" date="1994" name="Gene">
        <title>Gene organization in the dnaA-gyrA region of the Streptomyces coelicolor chromosome.</title>
        <authorList>
            <person name="Calcutt M.J."/>
        </authorList>
    </citation>
    <scope>NUCLEOTIDE SEQUENCE [GENOMIC DNA]</scope>
    <source>
        <strain>A3(2) / NRRL B-16638</strain>
    </source>
</reference>
<reference key="2">
    <citation type="journal article" date="2002" name="Nature">
        <title>Complete genome sequence of the model actinomycete Streptomyces coelicolor A3(2).</title>
        <authorList>
            <person name="Bentley S.D."/>
            <person name="Chater K.F."/>
            <person name="Cerdeno-Tarraga A.-M."/>
            <person name="Challis G.L."/>
            <person name="Thomson N.R."/>
            <person name="James K.D."/>
            <person name="Harris D.E."/>
            <person name="Quail M.A."/>
            <person name="Kieser H."/>
            <person name="Harper D."/>
            <person name="Bateman A."/>
            <person name="Brown S."/>
            <person name="Chandra G."/>
            <person name="Chen C.W."/>
            <person name="Collins M."/>
            <person name="Cronin A."/>
            <person name="Fraser A."/>
            <person name="Goble A."/>
            <person name="Hidalgo J."/>
            <person name="Hornsby T."/>
            <person name="Howarth S."/>
            <person name="Huang C.-H."/>
            <person name="Kieser T."/>
            <person name="Larke L."/>
            <person name="Murphy L.D."/>
            <person name="Oliver K."/>
            <person name="O'Neil S."/>
            <person name="Rabbinowitsch E."/>
            <person name="Rajandream M.A."/>
            <person name="Rutherford K.M."/>
            <person name="Rutter S."/>
            <person name="Seeger K."/>
            <person name="Saunders D."/>
            <person name="Sharp S."/>
            <person name="Squares R."/>
            <person name="Squares S."/>
            <person name="Taylor K."/>
            <person name="Warren T."/>
            <person name="Wietzorrek A."/>
            <person name="Woodward J.R."/>
            <person name="Barrell B.G."/>
            <person name="Parkhill J."/>
            <person name="Hopwood D.A."/>
        </authorList>
    </citation>
    <scope>NUCLEOTIDE SEQUENCE [LARGE SCALE GENOMIC DNA]</scope>
    <source>
        <strain>ATCC BAA-471 / A3(2) / M145</strain>
    </source>
</reference>
<proteinExistence type="inferred from homology"/>
<feature type="chain" id="PRO_0000145346" description="DNA gyrase subunit B">
    <location>
        <begin position="1"/>
        <end position="686"/>
    </location>
</feature>
<feature type="domain" description="Toprim" evidence="1">
    <location>
        <begin position="465"/>
        <end position="579"/>
    </location>
</feature>
<feature type="region of interest" description="Disordered" evidence="2">
    <location>
        <begin position="1"/>
        <end position="29"/>
    </location>
</feature>
<feature type="compositionally biased region" description="Polar residues" evidence="2">
    <location>
        <begin position="1"/>
        <end position="27"/>
    </location>
</feature>
<feature type="binding site" evidence="1">
    <location>
        <position position="471"/>
    </location>
    <ligand>
        <name>Mg(2+)</name>
        <dbReference type="ChEBI" id="CHEBI:18420"/>
        <label>1</label>
        <note>catalytic</note>
    </ligand>
</feature>
<feature type="binding site" evidence="1">
    <location>
        <position position="544"/>
    </location>
    <ligand>
        <name>Mg(2+)</name>
        <dbReference type="ChEBI" id="CHEBI:18420"/>
        <label>1</label>
        <note>catalytic</note>
    </ligand>
</feature>
<feature type="binding site" evidence="1">
    <location>
        <position position="544"/>
    </location>
    <ligand>
        <name>Mg(2+)</name>
        <dbReference type="ChEBI" id="CHEBI:18420"/>
        <label>2</label>
    </ligand>
</feature>
<feature type="binding site" evidence="1">
    <location>
        <position position="546"/>
    </location>
    <ligand>
        <name>Mg(2+)</name>
        <dbReference type="ChEBI" id="CHEBI:18420"/>
        <label>2</label>
    </ligand>
</feature>
<feature type="site" description="Interaction with DNA" evidence="1">
    <location>
        <position position="496"/>
    </location>
</feature>
<feature type="site" description="Interaction with DNA" evidence="1">
    <location>
        <position position="499"/>
    </location>
</feature>